<name>DTD_CALBD</name>
<evidence type="ECO:0000255" key="1">
    <source>
        <dbReference type="HAMAP-Rule" id="MF_00518"/>
    </source>
</evidence>
<feature type="chain" id="PRO_1000146179" description="D-aminoacyl-tRNA deacylase">
    <location>
        <begin position="1"/>
        <end position="149"/>
    </location>
</feature>
<feature type="short sequence motif" description="Gly-cisPro motif, important for rejection of L-amino acids" evidence="1">
    <location>
        <begin position="137"/>
        <end position="138"/>
    </location>
</feature>
<keyword id="KW-0963">Cytoplasm</keyword>
<keyword id="KW-0378">Hydrolase</keyword>
<keyword id="KW-0694">RNA-binding</keyword>
<keyword id="KW-0820">tRNA-binding</keyword>
<proteinExistence type="inferred from homology"/>
<comment type="function">
    <text evidence="1">An aminoacyl-tRNA editing enzyme that deacylates mischarged D-aminoacyl-tRNAs. Also deacylates mischarged glycyl-tRNA(Ala), protecting cells against glycine mischarging by AlaRS. Acts via tRNA-based rather than protein-based catalysis; rejects L-amino acids rather than detecting D-amino acids in the active site. By recycling D-aminoacyl-tRNA to D-amino acids and free tRNA molecules, this enzyme counteracts the toxicity associated with the formation of D-aminoacyl-tRNA entities in vivo and helps enforce protein L-homochirality.</text>
</comment>
<comment type="catalytic activity">
    <reaction evidence="1">
        <text>glycyl-tRNA(Ala) + H2O = tRNA(Ala) + glycine + H(+)</text>
        <dbReference type="Rhea" id="RHEA:53744"/>
        <dbReference type="Rhea" id="RHEA-COMP:9657"/>
        <dbReference type="Rhea" id="RHEA-COMP:13640"/>
        <dbReference type="ChEBI" id="CHEBI:15377"/>
        <dbReference type="ChEBI" id="CHEBI:15378"/>
        <dbReference type="ChEBI" id="CHEBI:57305"/>
        <dbReference type="ChEBI" id="CHEBI:78442"/>
        <dbReference type="ChEBI" id="CHEBI:78522"/>
        <dbReference type="EC" id="3.1.1.96"/>
    </reaction>
</comment>
<comment type="catalytic activity">
    <reaction evidence="1">
        <text>a D-aminoacyl-tRNA + H2O = a tRNA + a D-alpha-amino acid + H(+)</text>
        <dbReference type="Rhea" id="RHEA:13953"/>
        <dbReference type="Rhea" id="RHEA-COMP:10123"/>
        <dbReference type="Rhea" id="RHEA-COMP:10124"/>
        <dbReference type="ChEBI" id="CHEBI:15377"/>
        <dbReference type="ChEBI" id="CHEBI:15378"/>
        <dbReference type="ChEBI" id="CHEBI:59871"/>
        <dbReference type="ChEBI" id="CHEBI:78442"/>
        <dbReference type="ChEBI" id="CHEBI:79333"/>
        <dbReference type="EC" id="3.1.1.96"/>
    </reaction>
</comment>
<comment type="subunit">
    <text evidence="1">Homodimer.</text>
</comment>
<comment type="subcellular location">
    <subcellularLocation>
        <location evidence="1">Cytoplasm</location>
    </subcellularLocation>
</comment>
<comment type="domain">
    <text evidence="1">A Gly-cisPro motif from one monomer fits into the active site of the other monomer to allow specific chiral rejection of L-amino acids.</text>
</comment>
<comment type="similarity">
    <text evidence="1">Belongs to the DTD family.</text>
</comment>
<organism>
    <name type="scientific">Caldicellulosiruptor bescii (strain ATCC BAA-1888 / DSM 6725 / KCTC 15123 / Z-1320)</name>
    <name type="common">Anaerocellum thermophilum</name>
    <dbReference type="NCBI Taxonomy" id="521460"/>
    <lineage>
        <taxon>Bacteria</taxon>
        <taxon>Bacillati</taxon>
        <taxon>Bacillota</taxon>
        <taxon>Bacillota incertae sedis</taxon>
        <taxon>Caldicellulosiruptorales</taxon>
        <taxon>Caldicellulosiruptoraceae</taxon>
        <taxon>Caldicellulosiruptor</taxon>
    </lineage>
</organism>
<accession>B9ML29</accession>
<reference key="1">
    <citation type="submission" date="2009-01" db="EMBL/GenBank/DDBJ databases">
        <title>Complete sequence of chromosome of Caldicellulosiruptor becscii DSM 6725.</title>
        <authorList>
            <person name="Lucas S."/>
            <person name="Copeland A."/>
            <person name="Lapidus A."/>
            <person name="Glavina del Rio T."/>
            <person name="Tice H."/>
            <person name="Bruce D."/>
            <person name="Goodwin L."/>
            <person name="Pitluck S."/>
            <person name="Sims D."/>
            <person name="Meincke L."/>
            <person name="Brettin T."/>
            <person name="Detter J.C."/>
            <person name="Han C."/>
            <person name="Larimer F."/>
            <person name="Land M."/>
            <person name="Hauser L."/>
            <person name="Kyrpides N."/>
            <person name="Ovchinnikova G."/>
            <person name="Kataeva I."/>
            <person name="Adams M.W.W."/>
        </authorList>
    </citation>
    <scope>NUCLEOTIDE SEQUENCE [LARGE SCALE GENOMIC DNA]</scope>
    <source>
        <strain>ATCC BAA-1888 / DSM 6725 / KCTC 15123 / Z-1320</strain>
    </source>
</reference>
<gene>
    <name evidence="1" type="primary">dtd</name>
    <name type="ordered locus">Athe_1950</name>
</gene>
<sequence length="149" mass="16895">MRAVVQRVKEAFVIVDGKEVGRIQRGLCLLVGVAQDDTEEDADYLCEKVANLRIFEDETSKFNLSLMDVGGEVLVISNFTVMGDARKGRRPNFMFAAEKEKAERLYNYFVEKLKQKVRKVECGVFQAHMEVSILNDGPVTVLLDSKKIF</sequence>
<protein>
    <recommendedName>
        <fullName evidence="1">D-aminoacyl-tRNA deacylase</fullName>
        <shortName evidence="1">DTD</shortName>
        <ecNumber evidence="1">3.1.1.96</ecNumber>
    </recommendedName>
    <alternativeName>
        <fullName evidence="1">Gly-tRNA(Ala) deacylase</fullName>
    </alternativeName>
</protein>
<dbReference type="EC" id="3.1.1.96" evidence="1"/>
<dbReference type="EMBL" id="CP001393">
    <property type="protein sequence ID" value="ACM61037.1"/>
    <property type="molecule type" value="Genomic_DNA"/>
</dbReference>
<dbReference type="RefSeq" id="WP_015908327.1">
    <property type="nucleotide sequence ID" value="NC_012034.1"/>
</dbReference>
<dbReference type="SMR" id="B9ML29"/>
<dbReference type="STRING" id="521460.Athe_1950"/>
<dbReference type="GeneID" id="31773300"/>
<dbReference type="KEGG" id="ate:Athe_1950"/>
<dbReference type="eggNOG" id="COG1490">
    <property type="taxonomic scope" value="Bacteria"/>
</dbReference>
<dbReference type="HOGENOM" id="CLU_076901_1_0_9"/>
<dbReference type="Proteomes" id="UP000007723">
    <property type="component" value="Chromosome"/>
</dbReference>
<dbReference type="GO" id="GO:0005737">
    <property type="term" value="C:cytoplasm"/>
    <property type="evidence" value="ECO:0007669"/>
    <property type="project" value="UniProtKB-SubCell"/>
</dbReference>
<dbReference type="GO" id="GO:0051500">
    <property type="term" value="F:D-tyrosyl-tRNA(Tyr) deacylase activity"/>
    <property type="evidence" value="ECO:0007669"/>
    <property type="project" value="TreeGrafter"/>
</dbReference>
<dbReference type="GO" id="GO:0106026">
    <property type="term" value="F:Gly-tRNA(Ala) deacylase activity"/>
    <property type="evidence" value="ECO:0007669"/>
    <property type="project" value="UniProtKB-UniRule"/>
</dbReference>
<dbReference type="GO" id="GO:0043908">
    <property type="term" value="F:Ser(Gly)-tRNA(Ala) hydrolase activity"/>
    <property type="evidence" value="ECO:0007669"/>
    <property type="project" value="UniProtKB-UniRule"/>
</dbReference>
<dbReference type="GO" id="GO:0000049">
    <property type="term" value="F:tRNA binding"/>
    <property type="evidence" value="ECO:0007669"/>
    <property type="project" value="UniProtKB-UniRule"/>
</dbReference>
<dbReference type="GO" id="GO:0019478">
    <property type="term" value="P:D-amino acid catabolic process"/>
    <property type="evidence" value="ECO:0007669"/>
    <property type="project" value="UniProtKB-UniRule"/>
</dbReference>
<dbReference type="CDD" id="cd00563">
    <property type="entry name" value="Dtyr_deacylase"/>
    <property type="match status" value="1"/>
</dbReference>
<dbReference type="FunFam" id="3.50.80.10:FF:000001">
    <property type="entry name" value="D-aminoacyl-tRNA deacylase"/>
    <property type="match status" value="1"/>
</dbReference>
<dbReference type="Gene3D" id="3.50.80.10">
    <property type="entry name" value="D-tyrosyl-tRNA(Tyr) deacylase"/>
    <property type="match status" value="1"/>
</dbReference>
<dbReference type="HAMAP" id="MF_00518">
    <property type="entry name" value="Deacylase_Dtd"/>
    <property type="match status" value="1"/>
</dbReference>
<dbReference type="InterPro" id="IPR003732">
    <property type="entry name" value="Daa-tRNA_deacyls_DTD"/>
</dbReference>
<dbReference type="InterPro" id="IPR023509">
    <property type="entry name" value="DTD-like_sf"/>
</dbReference>
<dbReference type="NCBIfam" id="TIGR00256">
    <property type="entry name" value="D-aminoacyl-tRNA deacylase"/>
    <property type="match status" value="1"/>
</dbReference>
<dbReference type="PANTHER" id="PTHR10472:SF5">
    <property type="entry name" value="D-AMINOACYL-TRNA DEACYLASE 1"/>
    <property type="match status" value="1"/>
</dbReference>
<dbReference type="PANTHER" id="PTHR10472">
    <property type="entry name" value="D-TYROSYL-TRNA TYR DEACYLASE"/>
    <property type="match status" value="1"/>
</dbReference>
<dbReference type="Pfam" id="PF02580">
    <property type="entry name" value="Tyr_Deacylase"/>
    <property type="match status" value="1"/>
</dbReference>
<dbReference type="SUPFAM" id="SSF69500">
    <property type="entry name" value="DTD-like"/>
    <property type="match status" value="1"/>
</dbReference>